<feature type="chain" id="PRO_0000181468" description="Probable nicotinate-nucleotide adenylyltransferase">
    <location>
        <begin position="1"/>
        <end position="211"/>
    </location>
</feature>
<protein>
    <recommendedName>
        <fullName evidence="1">Probable nicotinate-nucleotide adenylyltransferase</fullName>
        <ecNumber evidence="1">2.7.7.18</ecNumber>
    </recommendedName>
    <alternativeName>
        <fullName evidence="1">Deamido-NAD(+) diphosphorylase</fullName>
    </alternativeName>
    <alternativeName>
        <fullName evidence="1">Deamido-NAD(+) pyrophosphorylase</fullName>
    </alternativeName>
    <alternativeName>
        <fullName evidence="1">Nicotinate mononucleotide adenylyltransferase</fullName>
        <shortName evidence="1">NaMN adenylyltransferase</shortName>
    </alternativeName>
</protein>
<name>NADD_WIGBR</name>
<organism>
    <name type="scientific">Wigglesworthia glossinidia brevipalpis</name>
    <dbReference type="NCBI Taxonomy" id="36870"/>
    <lineage>
        <taxon>Bacteria</taxon>
        <taxon>Pseudomonadati</taxon>
        <taxon>Pseudomonadota</taxon>
        <taxon>Gammaproteobacteria</taxon>
        <taxon>Enterobacterales</taxon>
        <taxon>Erwiniaceae</taxon>
        <taxon>Wigglesworthia</taxon>
    </lineage>
</organism>
<keyword id="KW-0067">ATP-binding</keyword>
<keyword id="KW-0520">NAD</keyword>
<keyword id="KW-0547">Nucleotide-binding</keyword>
<keyword id="KW-0548">Nucleotidyltransferase</keyword>
<keyword id="KW-0662">Pyridine nucleotide biosynthesis</keyword>
<keyword id="KW-1185">Reference proteome</keyword>
<keyword id="KW-0808">Transferase</keyword>
<proteinExistence type="inferred from homology"/>
<evidence type="ECO:0000255" key="1">
    <source>
        <dbReference type="HAMAP-Rule" id="MF_00244"/>
    </source>
</evidence>
<reference key="1">
    <citation type="journal article" date="2002" name="Nat. Genet.">
        <title>Genome sequence of the endocellular obligate symbiont of tsetse flies, Wigglesworthia glossinidia.</title>
        <authorList>
            <person name="Akman L."/>
            <person name="Yamashita A."/>
            <person name="Watanabe H."/>
            <person name="Oshima K."/>
            <person name="Shiba T."/>
            <person name="Hattori M."/>
            <person name="Aksoy S."/>
        </authorList>
    </citation>
    <scope>NUCLEOTIDE SEQUENCE [LARGE SCALE GENOMIC DNA]</scope>
</reference>
<dbReference type="EC" id="2.7.7.18" evidence="1"/>
<dbReference type="EMBL" id="BA000021">
    <property type="protein sequence ID" value="BAC24317.1"/>
    <property type="molecule type" value="Genomic_DNA"/>
</dbReference>
<dbReference type="SMR" id="Q8D330"/>
<dbReference type="STRING" id="36870.gene:10368659"/>
<dbReference type="KEGG" id="wbr:ybeN"/>
<dbReference type="eggNOG" id="COG1057">
    <property type="taxonomic scope" value="Bacteria"/>
</dbReference>
<dbReference type="HOGENOM" id="CLU_069765_0_0_6"/>
<dbReference type="OrthoDB" id="5295945at2"/>
<dbReference type="UniPathway" id="UPA00253">
    <property type="reaction ID" value="UER00332"/>
</dbReference>
<dbReference type="Proteomes" id="UP000000562">
    <property type="component" value="Chromosome"/>
</dbReference>
<dbReference type="GO" id="GO:0005524">
    <property type="term" value="F:ATP binding"/>
    <property type="evidence" value="ECO:0007669"/>
    <property type="project" value="UniProtKB-KW"/>
</dbReference>
<dbReference type="GO" id="GO:0004515">
    <property type="term" value="F:nicotinate-nucleotide adenylyltransferase activity"/>
    <property type="evidence" value="ECO:0007669"/>
    <property type="project" value="UniProtKB-UniRule"/>
</dbReference>
<dbReference type="GO" id="GO:0009435">
    <property type="term" value="P:NAD biosynthetic process"/>
    <property type="evidence" value="ECO:0007669"/>
    <property type="project" value="UniProtKB-UniRule"/>
</dbReference>
<dbReference type="CDD" id="cd02165">
    <property type="entry name" value="NMNAT"/>
    <property type="match status" value="1"/>
</dbReference>
<dbReference type="Gene3D" id="3.40.50.620">
    <property type="entry name" value="HUPs"/>
    <property type="match status" value="1"/>
</dbReference>
<dbReference type="HAMAP" id="MF_00244">
    <property type="entry name" value="NaMN_adenylyltr"/>
    <property type="match status" value="1"/>
</dbReference>
<dbReference type="InterPro" id="IPR004821">
    <property type="entry name" value="Cyt_trans-like"/>
</dbReference>
<dbReference type="InterPro" id="IPR005248">
    <property type="entry name" value="NadD/NMNAT"/>
</dbReference>
<dbReference type="InterPro" id="IPR014729">
    <property type="entry name" value="Rossmann-like_a/b/a_fold"/>
</dbReference>
<dbReference type="NCBIfam" id="TIGR00125">
    <property type="entry name" value="cyt_tran_rel"/>
    <property type="match status" value="1"/>
</dbReference>
<dbReference type="NCBIfam" id="TIGR00482">
    <property type="entry name" value="nicotinate (nicotinamide) nucleotide adenylyltransferase"/>
    <property type="match status" value="1"/>
</dbReference>
<dbReference type="NCBIfam" id="NF000839">
    <property type="entry name" value="PRK00071.1-1"/>
    <property type="match status" value="1"/>
</dbReference>
<dbReference type="PANTHER" id="PTHR39321">
    <property type="entry name" value="NICOTINATE-NUCLEOTIDE ADENYLYLTRANSFERASE-RELATED"/>
    <property type="match status" value="1"/>
</dbReference>
<dbReference type="PANTHER" id="PTHR39321:SF3">
    <property type="entry name" value="PHOSPHOPANTETHEINE ADENYLYLTRANSFERASE"/>
    <property type="match status" value="1"/>
</dbReference>
<dbReference type="Pfam" id="PF01467">
    <property type="entry name" value="CTP_transf_like"/>
    <property type="match status" value="1"/>
</dbReference>
<dbReference type="SUPFAM" id="SSF52374">
    <property type="entry name" value="Nucleotidylyl transferase"/>
    <property type="match status" value="1"/>
</dbReference>
<gene>
    <name evidence="1" type="primary">nadD</name>
    <name type="ordered locus">WIGBR1710</name>
</gene>
<comment type="function">
    <text evidence="1">Catalyzes the reversible adenylation of nicotinate mononucleotide (NaMN) to nicotinic acid adenine dinucleotide (NaAD).</text>
</comment>
<comment type="catalytic activity">
    <reaction evidence="1">
        <text>nicotinate beta-D-ribonucleotide + ATP + H(+) = deamido-NAD(+) + diphosphate</text>
        <dbReference type="Rhea" id="RHEA:22860"/>
        <dbReference type="ChEBI" id="CHEBI:15378"/>
        <dbReference type="ChEBI" id="CHEBI:30616"/>
        <dbReference type="ChEBI" id="CHEBI:33019"/>
        <dbReference type="ChEBI" id="CHEBI:57502"/>
        <dbReference type="ChEBI" id="CHEBI:58437"/>
        <dbReference type="EC" id="2.7.7.18"/>
    </reaction>
</comment>
<comment type="pathway">
    <text evidence="1">Cofactor biosynthesis; NAD(+) biosynthesis; deamido-NAD(+) from nicotinate D-ribonucleotide: step 1/1.</text>
</comment>
<comment type="similarity">
    <text evidence="1">Belongs to the NadD family.</text>
</comment>
<accession>Q8D330</accession>
<sequence length="211" mass="24382">MKKSILTAFYGGTFDPIHNGHIKSAIALAKLIHLNRIILIPNGSPVHKPIPVASAEDRINMINLAISEISEDIFEIDYREINNKIPSYTINTFENLRKEYGPKAPLGFILGQDSFMKLHTWYRGYDILKFCHLLICARSNNMINLKKIKFKFIDPKILHYIPFGLIYYAFTPIIKISSRNIRLRYKFGISCNGLISSSVQKYINKKNIYKR</sequence>